<name>PUR71_BRADU</name>
<protein>
    <recommendedName>
        <fullName>Phosphoribosylaminoimidazole-succinocarboxamide synthase A</fullName>
        <ecNumber>6.3.2.6</ecNumber>
    </recommendedName>
    <alternativeName>
        <fullName>SAICAR synthetase A</fullName>
    </alternativeName>
</protein>
<proteinExistence type="inferred from homology"/>
<feature type="chain" id="PRO_0000100807" description="Phosphoribosylaminoimidazole-succinocarboxamide synthase A">
    <location>
        <begin position="1"/>
        <end position="255"/>
    </location>
</feature>
<dbReference type="EC" id="6.3.2.6"/>
<dbReference type="EMBL" id="BA000040">
    <property type="protein sequence ID" value="BAC50994.1"/>
    <property type="molecule type" value="Genomic_DNA"/>
</dbReference>
<dbReference type="RefSeq" id="NP_772369.1">
    <property type="nucleotide sequence ID" value="NC_004463.1"/>
</dbReference>
<dbReference type="SMR" id="Q89IB0"/>
<dbReference type="FunCoup" id="Q89IB0">
    <property type="interactions" value="657"/>
</dbReference>
<dbReference type="STRING" id="224911.AAV28_26155"/>
<dbReference type="EnsemblBacteria" id="BAC50994">
    <property type="protein sequence ID" value="BAC50994"/>
    <property type="gene ID" value="BAC50994"/>
</dbReference>
<dbReference type="KEGG" id="bja:bll5729"/>
<dbReference type="PATRIC" id="fig|224911.5.peg.5843"/>
<dbReference type="eggNOG" id="COG0152">
    <property type="taxonomic scope" value="Bacteria"/>
</dbReference>
<dbReference type="HOGENOM" id="CLU_061495_2_0_5"/>
<dbReference type="InParanoid" id="Q89IB0"/>
<dbReference type="OrthoDB" id="9801549at2"/>
<dbReference type="PhylomeDB" id="Q89IB0"/>
<dbReference type="UniPathway" id="UPA00074">
    <property type="reaction ID" value="UER00131"/>
</dbReference>
<dbReference type="Proteomes" id="UP000002526">
    <property type="component" value="Chromosome"/>
</dbReference>
<dbReference type="GO" id="GO:0005829">
    <property type="term" value="C:cytosol"/>
    <property type="evidence" value="ECO:0000318"/>
    <property type="project" value="GO_Central"/>
</dbReference>
<dbReference type="GO" id="GO:0005524">
    <property type="term" value="F:ATP binding"/>
    <property type="evidence" value="ECO:0007669"/>
    <property type="project" value="UniProtKB-KW"/>
</dbReference>
<dbReference type="GO" id="GO:0004639">
    <property type="term" value="F:phosphoribosylaminoimidazolesuccinocarboxamide synthase activity"/>
    <property type="evidence" value="ECO:0000318"/>
    <property type="project" value="GO_Central"/>
</dbReference>
<dbReference type="GO" id="GO:0006189">
    <property type="term" value="P:'de novo' IMP biosynthetic process"/>
    <property type="evidence" value="ECO:0007669"/>
    <property type="project" value="UniProtKB-UniRule"/>
</dbReference>
<dbReference type="GO" id="GO:0009236">
    <property type="term" value="P:cobalamin biosynthetic process"/>
    <property type="evidence" value="ECO:0007669"/>
    <property type="project" value="InterPro"/>
</dbReference>
<dbReference type="CDD" id="cd01415">
    <property type="entry name" value="SAICAR_synt_PurC"/>
    <property type="match status" value="1"/>
</dbReference>
<dbReference type="FunFam" id="3.30.470.20:FF:000006">
    <property type="entry name" value="Phosphoribosylaminoimidazole-succinocarboxamide synthase"/>
    <property type="match status" value="1"/>
</dbReference>
<dbReference type="Gene3D" id="3.30.470.20">
    <property type="entry name" value="ATP-grasp fold, B domain"/>
    <property type="match status" value="1"/>
</dbReference>
<dbReference type="Gene3D" id="3.30.200.20">
    <property type="entry name" value="Phosphorylase Kinase, domain 1"/>
    <property type="match status" value="1"/>
</dbReference>
<dbReference type="HAMAP" id="MF_00137">
    <property type="entry name" value="SAICAR_synth"/>
    <property type="match status" value="1"/>
</dbReference>
<dbReference type="InterPro" id="IPR028923">
    <property type="entry name" value="SAICAR_synt/ADE2_N"/>
</dbReference>
<dbReference type="InterPro" id="IPR033934">
    <property type="entry name" value="SAICAR_synt_PurC"/>
</dbReference>
<dbReference type="InterPro" id="IPR001636">
    <property type="entry name" value="SAICAR_synth"/>
</dbReference>
<dbReference type="InterPro" id="IPR050089">
    <property type="entry name" value="SAICAR_synthetase"/>
</dbReference>
<dbReference type="InterPro" id="IPR018236">
    <property type="entry name" value="SAICAR_synthetase_CS"/>
</dbReference>
<dbReference type="NCBIfam" id="TIGR00081">
    <property type="entry name" value="purC"/>
    <property type="match status" value="1"/>
</dbReference>
<dbReference type="PANTHER" id="PTHR43599">
    <property type="entry name" value="MULTIFUNCTIONAL PROTEIN ADE2"/>
    <property type="match status" value="1"/>
</dbReference>
<dbReference type="PANTHER" id="PTHR43599:SF3">
    <property type="entry name" value="SI:DKEY-6E2.2"/>
    <property type="match status" value="1"/>
</dbReference>
<dbReference type="Pfam" id="PF01259">
    <property type="entry name" value="SAICAR_synt"/>
    <property type="match status" value="1"/>
</dbReference>
<dbReference type="SUPFAM" id="SSF56104">
    <property type="entry name" value="SAICAR synthase-like"/>
    <property type="match status" value="1"/>
</dbReference>
<dbReference type="PROSITE" id="PS01057">
    <property type="entry name" value="SAICAR_SYNTHETASE_1"/>
    <property type="match status" value="1"/>
</dbReference>
<keyword id="KW-0067">ATP-binding</keyword>
<keyword id="KW-0436">Ligase</keyword>
<keyword id="KW-0547">Nucleotide-binding</keyword>
<keyword id="KW-0658">Purine biosynthesis</keyword>
<keyword id="KW-1185">Reference proteome</keyword>
<accession>Q89IB0</accession>
<comment type="catalytic activity">
    <reaction>
        <text>5-amino-1-(5-phospho-D-ribosyl)imidazole-4-carboxylate + L-aspartate + ATP = (2S)-2-[5-amino-1-(5-phospho-beta-D-ribosyl)imidazole-4-carboxamido]succinate + ADP + phosphate + 2 H(+)</text>
        <dbReference type="Rhea" id="RHEA:22628"/>
        <dbReference type="ChEBI" id="CHEBI:15378"/>
        <dbReference type="ChEBI" id="CHEBI:29991"/>
        <dbReference type="ChEBI" id="CHEBI:30616"/>
        <dbReference type="ChEBI" id="CHEBI:43474"/>
        <dbReference type="ChEBI" id="CHEBI:58443"/>
        <dbReference type="ChEBI" id="CHEBI:77657"/>
        <dbReference type="ChEBI" id="CHEBI:456216"/>
        <dbReference type="EC" id="6.3.2.6"/>
    </reaction>
</comment>
<comment type="pathway">
    <text>Purine metabolism; IMP biosynthesis via de novo pathway; 5-amino-1-(5-phospho-D-ribosyl)imidazole-4-carboxamide from 5-amino-1-(5-phospho-D-ribosyl)imidazole-4-carboxylate: step 1/2.</text>
</comment>
<comment type="similarity">
    <text evidence="1">Belongs to the SAICAR synthetase family.</text>
</comment>
<organism>
    <name type="scientific">Bradyrhizobium diazoefficiens (strain JCM 10833 / BCRC 13528 / IAM 13628 / NBRC 14792 / USDA 110)</name>
    <dbReference type="NCBI Taxonomy" id="224911"/>
    <lineage>
        <taxon>Bacteria</taxon>
        <taxon>Pseudomonadati</taxon>
        <taxon>Pseudomonadota</taxon>
        <taxon>Alphaproteobacteria</taxon>
        <taxon>Hyphomicrobiales</taxon>
        <taxon>Nitrobacteraceae</taxon>
        <taxon>Bradyrhizobium</taxon>
    </lineage>
</organism>
<gene>
    <name type="primary">purC1</name>
    <name type="ordered locus">bll5729</name>
</gene>
<reference key="1">
    <citation type="journal article" date="2002" name="DNA Res.">
        <title>Complete genomic sequence of nitrogen-fixing symbiotic bacterium Bradyrhizobium japonicum USDA110.</title>
        <authorList>
            <person name="Kaneko T."/>
            <person name="Nakamura Y."/>
            <person name="Sato S."/>
            <person name="Minamisawa K."/>
            <person name="Uchiumi T."/>
            <person name="Sasamoto S."/>
            <person name="Watanabe A."/>
            <person name="Idesawa K."/>
            <person name="Iriguchi M."/>
            <person name="Kawashima K."/>
            <person name="Kohara M."/>
            <person name="Matsumoto M."/>
            <person name="Shimpo S."/>
            <person name="Tsuruoka H."/>
            <person name="Wada T."/>
            <person name="Yamada M."/>
            <person name="Tabata S."/>
        </authorList>
    </citation>
    <scope>NUCLEOTIDE SEQUENCE [LARGE SCALE GENOMIC DNA]</scope>
    <source>
        <strain>JCM 10833 / BCRC 13528 / IAM 13628 / NBRC 14792 / USDA 110</strain>
    </source>
</reference>
<sequence length="255" mass="29186">MSRRRRIYEGKAKVLYEGPEPGTLIQHFKDDATAFNAKKHQVIEGKGVLNNRISEYLFQHLNDIGVPTHFIRRLNMREQLIREVEIVPLEVVVRNVAAGSLSQRLGIEEGTQLPRSIIEFYYKNDQLNDPMVSEEHITAFGWATPQEIDDIMALAIRVNDFLTGLFLGIGIRLVDFKMECGRLFENEMMRIIVADEISPDSCRLWDIKSNEKLDKDRFRRDLGGLLEAYTEVAKRLGILMENERPAGSGPVLVKS</sequence>
<evidence type="ECO:0000305" key="1"/>